<name>3SX1_OPHHA</name>
<sequence length="57" mass="6516">LICHRVHGLQTCEPDQKFCFRKTTMFFPNHPVLLMGCTSSCPTEKYSVCCSTDKCNK</sequence>
<protein>
    <recommendedName>
        <fullName evidence="4 5">Neurotoxin Oh9-1</fullName>
    </recommendedName>
    <alternativeName>
        <fullName evidence="5">OMEGA-neurotoxin Oh9-1</fullName>
    </alternativeName>
    <alternativeName>
        <fullName>Three-finger toxin</fullName>
        <shortName>3FTx</shortName>
    </alternativeName>
</protein>
<feature type="chain" id="PRO_0000093630" description="Neurotoxin Oh9-1" evidence="2">
    <location>
        <begin position="1"/>
        <end position="57"/>
    </location>
</feature>
<feature type="site" description="Important residue for inhibition of muscle alpha-1-beta-1-delta-epsilon (CHRNA1-CHRNB1-CHRND-CHRNE) and neuronal alpha-3-beta-2/CHRNA3-CHRNB2 nAChR" evidence="3">
    <location>
        <position position="7"/>
    </location>
</feature>
<feature type="site" description="Important residue for inhibition of muscle alpha-1-beta-1-delta-epsilon (CHRNA1-CHRNB1-CHRND-CHRNE) and neuronal alpha-3-beta-2/CHRNA3-CHRNB2 nAChR" evidence="3">
    <location>
        <position position="22"/>
    </location>
</feature>
<feature type="site" description="Key residue for inhibition of muscle alpha-1-beta-1-delta-epsilon (CHRNA1-CHRNB1-CHRND-CHRNE) nAChR" evidence="3">
    <location>
        <position position="23"/>
    </location>
</feature>
<feature type="site" description="Important residue for inhibition of muscle alpha-1-beta-1-delta-epsilon (CHRNA1-CHRNB1-CHRND-CHRNE) nAChR" evidence="3">
    <location>
        <position position="24"/>
    </location>
</feature>
<feature type="site" description="Key residue for inhibition of muscle alpha-1-beta-1-delta-epsilon (CHRNA1-CHRNB1-CHRND-CHRNE) and important for inhibition of neuronal alpha-3-beta-2/CHRNA3-CHRNB2 nAChR" evidence="3">
    <location>
        <position position="25"/>
    </location>
</feature>
<feature type="site" description="Important residue for inhibition of muscle alpha-1-beta-1-delta-epsilon (CHRNA1-CHRNB1-CHRND-CHRNE) nAChR" evidence="3">
    <location>
        <position position="26"/>
    </location>
</feature>
<feature type="site" description="Key residue for inhibition of muscle alpha-1-beta-1-delta-epsilon (CHRNA1-CHRNB1-CHRND-CHRNE) and important residue for inhibition of neuronal alpha-3-beta-2/CHRNA3-CHRNB2 nAChR" evidence="3">
    <location>
        <position position="27"/>
    </location>
</feature>
<feature type="site" description="Important residue for inhibition of muscle alpha-1-beta-1-delta-epsilon (CHRNA1-CHRNB1-CHRND-CHRNE) and neuronal alpha-3-beta-2/CHRNA3-CHRNB2 nAChR" evidence="3">
    <location>
        <position position="30"/>
    </location>
</feature>
<feature type="site" description="Important residue for inhibition of muscle alpha-1-beta-1-delta-epsilon (CHRNA1-CHRNB1-CHRND-CHRNE) and neuronal alpha-3-beta-2/CHRNA3-CHRNB2 nAChR" evidence="3">
    <location>
        <position position="45"/>
    </location>
</feature>
<feature type="site" description="Important residue for interaction with muscle alpha-1-beta-1-delta-epsilon (CHRNA1-CHRNB1-CHRND-CHRNE) and neuronal alpha-3-beta-2/CHRNA3-CHRNB2 nAChR" evidence="3">
    <location>
        <position position="46"/>
    </location>
</feature>
<feature type="disulfide bond" evidence="1">
    <location>
        <begin position="3"/>
        <end position="19"/>
    </location>
</feature>
<feature type="disulfide bond" evidence="1">
    <location>
        <begin position="12"/>
        <end position="37"/>
    </location>
</feature>
<feature type="disulfide bond" evidence="1">
    <location>
        <begin position="41"/>
        <end position="49"/>
    </location>
</feature>
<feature type="disulfide bond" evidence="1">
    <location>
        <begin position="50"/>
        <end position="55"/>
    </location>
</feature>
<feature type="mutagenesis site" description="Small decrease in inhibition of rat muscle alpha-1-beta-1-delta-epsilon (CHRNA1-CHRNB1-CHRND-CHRNE) and neuronal alpha-3-beta-2/CHRNA3-CHRNB2 nAChR." evidence="3">
    <original>H</original>
    <variation>A</variation>
    <location>
        <position position="7"/>
    </location>
</feature>
<feature type="mutagenesis site" description="Small decrease in inhibition of rat muscle alpha-1-beta-1-delta-epsilon (CHRNA1-CHRNB1-CHRND-CHRNE) and neuronal alpha-3-beta-2/CHRNA3-CHRNB2 nAChR." evidence="3">
    <original>K</original>
    <variation>A</variation>
    <location>
        <position position="22"/>
    </location>
</feature>
<feature type="mutagenesis site" description="Complete loss of inhibition of rat muscle alpha-1-beta-1-delta-epsilon (CHRNA1-CHRNB1-CHRND-CHRNE) and no change in inhibition of neuronal alpha-3-beta-2/CHRNA3-CHRNB2 nAChR." evidence="3">
    <original>T</original>
    <variation>A</variation>
    <location>
        <position position="23"/>
    </location>
</feature>
<feature type="mutagenesis site" description="Small decrease in inhibition of rat muscle alpha-1-beta-1-delta-epsilon (CHRNA1-CHRNB1-CHRND-CHRNE) and small increase in inhibition of neuronal alpha-3-beta-2/CHRNA3-CHRNB2 nAChR." evidence="3">
    <original>T</original>
    <variation>A</variation>
    <location>
        <position position="24"/>
    </location>
</feature>
<feature type="mutagenesis site" description="Complete loss of inhibition of rat muscle alpha-1-beta-1-delta-epsilon (CHRNA1-CHRNB1-CHRND-CHRNE) and small decrease in inhibition of neuronal alpha-3-beta-2/CHRNA3-CHRNB2 nAChR." evidence="3">
    <original>M</original>
    <variation>A</variation>
    <location>
        <position position="25"/>
    </location>
</feature>
<feature type="mutagenesis site" description="Important decrease in inhibition of rat muscle alpha-1-beta-1-delta-epsilon (CHRNA1-CHRNB1-CHRND-CHRNE) and no change in inhibition of neuronal alpha-3-beta-2/CHRNA3-CHRNB2 nAChR." evidence="3">
    <original>F</original>
    <variation>A</variation>
    <location>
        <position position="26"/>
    </location>
</feature>
<feature type="mutagenesis site" description="Important decrease in inhibition of rat muscle alpha-1-beta-1-delta-epsilon (CHRNA1-CHRNB1-CHRND-CHRNE) and small decrease in inhibition of neuronal alpha-3-beta-2/CHRNA3-CHRNB2 nAChR." evidence="3">
    <original>F</original>
    <variation>A</variation>
    <location>
        <position position="27"/>
    </location>
</feature>
<feature type="mutagenesis site" description="No change in inhibition of rat muscle alpha-1-beta-1-delta-epsilon (CHRNA1-CHRNB1-CHRND-CHRNE) and small increase in inhibition of neuronal alpha-3-beta-2/CHRNA3-CHRNB2 nAChR." evidence="3">
    <original>N</original>
    <variation>A</variation>
    <location>
        <position position="29"/>
    </location>
</feature>
<feature type="mutagenesis site" description="Small decrease in inhibition of rat muscle alpha-1-beta-1-delta-epsilon (CHRNA1-CHRNB1-CHRND-CHRNE) and important decrease in inhibition of neuronal alpha-3-beta-2/CHRNA3-CHRNB2 nAChR." evidence="3">
    <original>H</original>
    <variation>A</variation>
    <location>
        <position position="30"/>
    </location>
</feature>
<feature type="mutagenesis site" description="No change in inhibition of rat muscle alpha-1-beta-1-delta-epsilon (CHRNA1-CHRNB1-CHRND-CHRNE) and small increase in inhibition of neuronal alpha-3-beta-2/CHRNA3-CHRNB2 nAChR." evidence="3">
    <original>V</original>
    <variation>A</variation>
    <location>
        <position position="32"/>
    </location>
</feature>
<feature type="mutagenesis site" description="Small decrease in inhibition of rat muscle alpha-1-beta-1-delta-epsilon (CHRNA1-CHRNB1-CHRND-CHRNE) and neuronal alpha-3-beta-2/CHRNA3-CHRNB2 nAChR." evidence="3">
    <original>K</original>
    <variation>A</variation>
    <location>
        <position position="45"/>
    </location>
</feature>
<feature type="mutagenesis site" description="Small increase in inhibition of rat muscle alpha-1-beta-1-delta-epsilon (CHRNA1-CHRNB1-CHRND-CHRNE) and neuronal alpha-3-beta-2/CHRNA3-CHRNB2 nAChR." evidence="3">
    <original>Y</original>
    <variation>A</variation>
    <location>
        <position position="46"/>
    </location>
</feature>
<reference key="1">
    <citation type="journal article" date="2002" name="Biochem. Biophys. Res. Commun.">
        <title>Purification and characterization of a neurotoxin from the venom of Ophiophagus hannah (king cobra).</title>
        <authorList>
            <person name="Chang L.-S."/>
            <person name="Liou J.-C."/>
            <person name="Lin S.-R."/>
            <person name="Huang H.-B."/>
        </authorList>
    </citation>
    <scope>PROTEIN SEQUENCE</scope>
    <scope>FUNCTION</scope>
    <scope>SUBCELLULAR LOCATION</scope>
    <scope>TOXIC DOSE</scope>
    <scope>MASS SPECTROMETRY</scope>
    <scope>CIRCULAR DICHROISM ANALYSIS</scope>
    <source>
        <tissue>Venom</tissue>
    </source>
</reference>
<reference key="2">
    <citation type="journal article" date="2015" name="ACS Chem. Biol.">
        <title>A distinct functional site in OMEGA-neurotoxins: novel antagonists of nicotinic acetylcholine receptors from snake venom.</title>
        <authorList>
            <person name="Hassan-Puttaswamy V."/>
            <person name="Adams D.J."/>
            <person name="Kini R.M."/>
        </authorList>
    </citation>
    <scope>FUNCTION</scope>
    <scope>MUTAGENESIS OF HIS-7; LYS-22; THR-23; THR-24; MET-25; PHE-26; PHE-27; ASN-29; HIS-30; VAL-32; LYS-45 AND TYR-46</scope>
</reference>
<proteinExistence type="evidence at protein level"/>
<dbReference type="SMR" id="P83302"/>
<dbReference type="GO" id="GO:0005576">
    <property type="term" value="C:extracellular region"/>
    <property type="evidence" value="ECO:0007669"/>
    <property type="project" value="UniProtKB-SubCell"/>
</dbReference>
<dbReference type="GO" id="GO:0030550">
    <property type="term" value="F:acetylcholine receptor inhibitor activity"/>
    <property type="evidence" value="ECO:0007669"/>
    <property type="project" value="UniProtKB-KW"/>
</dbReference>
<dbReference type="GO" id="GO:0099106">
    <property type="term" value="F:ion channel regulator activity"/>
    <property type="evidence" value="ECO:0007669"/>
    <property type="project" value="UniProtKB-KW"/>
</dbReference>
<dbReference type="GO" id="GO:0090729">
    <property type="term" value="F:toxin activity"/>
    <property type="evidence" value="ECO:0007669"/>
    <property type="project" value="UniProtKB-KW"/>
</dbReference>
<dbReference type="CDD" id="cd00206">
    <property type="entry name" value="TFP_snake_toxin"/>
    <property type="match status" value="1"/>
</dbReference>
<dbReference type="Gene3D" id="2.10.60.10">
    <property type="entry name" value="CD59"/>
    <property type="match status" value="1"/>
</dbReference>
<dbReference type="InterPro" id="IPR003571">
    <property type="entry name" value="Snake_3FTx"/>
</dbReference>
<dbReference type="InterPro" id="IPR045860">
    <property type="entry name" value="Snake_toxin-like_sf"/>
</dbReference>
<dbReference type="InterPro" id="IPR054131">
    <property type="entry name" value="Toxin_cobra-type"/>
</dbReference>
<dbReference type="Pfam" id="PF21947">
    <property type="entry name" value="Toxin_cobra-type"/>
    <property type="match status" value="1"/>
</dbReference>
<dbReference type="SUPFAM" id="SSF57302">
    <property type="entry name" value="Snake toxin-like"/>
    <property type="match status" value="1"/>
</dbReference>
<evidence type="ECO:0000250" key="1">
    <source>
        <dbReference type="UniProtKB" id="P0DKR6"/>
    </source>
</evidence>
<evidence type="ECO:0000269" key="2">
    <source>
    </source>
</evidence>
<evidence type="ECO:0000269" key="3">
    <source>
    </source>
</evidence>
<evidence type="ECO:0000303" key="4">
    <source>
    </source>
</evidence>
<evidence type="ECO:0000303" key="5">
    <source>
    </source>
</evidence>
<evidence type="ECO:0000305" key="6"/>
<evidence type="ECO:0000305" key="7">
    <source>
    </source>
</evidence>
<accession>P83302</accession>
<comment type="function">
    <text evidence="2 3">This toxin binds and inhibits rat muscle adult alpha-1-beta-1-delta-epsilon/CHRNA1-CHRNB1-CHRND-CHRNE (IC(50)=3.1 uM) and fetal alpha-1-beta-1-gamma-delta/CHRNA1-CHRNB1-CHRNG-CHRND (IC(50)=5.6 uM) nicotinic acetylcholine receptors (nAChR) (PubMed:26448325). Shows a very low inhibition on rat neuronal alpha-3-beta-2/CHRNA3-CHRNB2 nAChR (IC(50)=50.2 uM) nAChR (PubMed:26448325). Binds to the acetylcholine-binding pocket and acts as a competitive antagonist (PubMed:26448325). Does not inhibit human glycine receptor (homopentamer composed of alpha-1 subunits, GLRA1), but seems to potentiate it (about 2-fold increased activity) (PubMed:26448325).</text>
</comment>
<comment type="subcellular location">
    <subcellularLocation>
        <location evidence="2">Secreted</location>
    </subcellularLocation>
</comment>
<comment type="tissue specificity">
    <text evidence="7">Expressed by the venom gland.</text>
</comment>
<comment type="mass spectrometry" mass="6508.0" method="Electrospray" evidence="2"/>
<comment type="toxic dose">
    <text evidence="2">LD(50) is 2 mg/kg by intravenous injection into mouse.</text>
</comment>
<comment type="miscellaneous">
    <text evidence="3">Negative results: does not inhibit human alpha-7/CHRNA7, alpha-9-alpha-10/CHRNA9-CHRNA10, alpha-3-beta-2/CHRNA3-CHRNB2, alpha-4-beta-4/CHRNA4-CHRNB4, alpha-4-beta-2/CHRNA4-CHRNB2 and rat alpha-3-beta-4/CHRNA3-CHRNB4 nAChR. Does not inhibit human GABA(A) receptor (heteropentamer composed of alpha-1-beta-2-gamma-2 subunits and homopentamer composed of rho-1 subunits).</text>
</comment>
<comment type="miscellaneous">
    <text evidence="6">Is classified as a P-type cytotoxin, since a proline residue stands at position 28 (Pro-31 in standard classification).</text>
</comment>
<comment type="similarity">
    <text evidence="6">Belongs to the three-finger toxin family. Short-chain subfamily.</text>
</comment>
<keyword id="KW-0008">Acetylcholine receptor inhibiting toxin</keyword>
<keyword id="KW-0903">Direct protein sequencing</keyword>
<keyword id="KW-1015">Disulfide bond</keyword>
<keyword id="KW-0872">Ion channel impairing toxin</keyword>
<keyword id="KW-0528">Neurotoxin</keyword>
<keyword id="KW-0629">Postsynaptic neurotoxin</keyword>
<keyword id="KW-0964">Secreted</keyword>
<keyword id="KW-0800">Toxin</keyword>
<organism>
    <name type="scientific">Ophiophagus hannah</name>
    <name type="common">King cobra</name>
    <name type="synonym">Naja hannah</name>
    <dbReference type="NCBI Taxonomy" id="8665"/>
    <lineage>
        <taxon>Eukaryota</taxon>
        <taxon>Metazoa</taxon>
        <taxon>Chordata</taxon>
        <taxon>Craniata</taxon>
        <taxon>Vertebrata</taxon>
        <taxon>Euteleostomi</taxon>
        <taxon>Lepidosauria</taxon>
        <taxon>Squamata</taxon>
        <taxon>Bifurcata</taxon>
        <taxon>Unidentata</taxon>
        <taxon>Episquamata</taxon>
        <taxon>Toxicofera</taxon>
        <taxon>Serpentes</taxon>
        <taxon>Colubroidea</taxon>
        <taxon>Elapidae</taxon>
        <taxon>Elapinae</taxon>
        <taxon>Ophiophagus</taxon>
    </lineage>
</organism>